<dbReference type="EC" id="3.1.21.10" evidence="1"/>
<dbReference type="EMBL" id="CP001275">
    <property type="protein sequence ID" value="ACM05527.1"/>
    <property type="molecule type" value="Genomic_DNA"/>
</dbReference>
<dbReference type="RefSeq" id="WP_012642186.1">
    <property type="nucleotide sequence ID" value="NC_011959.1"/>
</dbReference>
<dbReference type="SMR" id="B9KZ87"/>
<dbReference type="STRING" id="309801.trd_0801"/>
<dbReference type="KEGG" id="tro:trd_0801"/>
<dbReference type="eggNOG" id="COG0817">
    <property type="taxonomic scope" value="Bacteria"/>
</dbReference>
<dbReference type="HOGENOM" id="CLU_091257_3_1_0"/>
<dbReference type="OrthoDB" id="9805499at2"/>
<dbReference type="Proteomes" id="UP000000447">
    <property type="component" value="Chromosome"/>
</dbReference>
<dbReference type="GO" id="GO:0005737">
    <property type="term" value="C:cytoplasm"/>
    <property type="evidence" value="ECO:0007669"/>
    <property type="project" value="UniProtKB-SubCell"/>
</dbReference>
<dbReference type="GO" id="GO:0048476">
    <property type="term" value="C:Holliday junction resolvase complex"/>
    <property type="evidence" value="ECO:0007669"/>
    <property type="project" value="UniProtKB-UniRule"/>
</dbReference>
<dbReference type="GO" id="GO:0008821">
    <property type="term" value="F:crossover junction DNA endonuclease activity"/>
    <property type="evidence" value="ECO:0007669"/>
    <property type="project" value="UniProtKB-UniRule"/>
</dbReference>
<dbReference type="GO" id="GO:0003677">
    <property type="term" value="F:DNA binding"/>
    <property type="evidence" value="ECO:0007669"/>
    <property type="project" value="UniProtKB-KW"/>
</dbReference>
<dbReference type="GO" id="GO:0000287">
    <property type="term" value="F:magnesium ion binding"/>
    <property type="evidence" value="ECO:0007669"/>
    <property type="project" value="UniProtKB-UniRule"/>
</dbReference>
<dbReference type="GO" id="GO:0006310">
    <property type="term" value="P:DNA recombination"/>
    <property type="evidence" value="ECO:0007669"/>
    <property type="project" value="UniProtKB-UniRule"/>
</dbReference>
<dbReference type="GO" id="GO:0006281">
    <property type="term" value="P:DNA repair"/>
    <property type="evidence" value="ECO:0007669"/>
    <property type="project" value="UniProtKB-UniRule"/>
</dbReference>
<dbReference type="CDD" id="cd16962">
    <property type="entry name" value="RuvC"/>
    <property type="match status" value="1"/>
</dbReference>
<dbReference type="FunFam" id="3.30.420.10:FF:000002">
    <property type="entry name" value="Crossover junction endodeoxyribonuclease RuvC"/>
    <property type="match status" value="1"/>
</dbReference>
<dbReference type="Gene3D" id="3.30.420.10">
    <property type="entry name" value="Ribonuclease H-like superfamily/Ribonuclease H"/>
    <property type="match status" value="1"/>
</dbReference>
<dbReference type="HAMAP" id="MF_00034">
    <property type="entry name" value="RuvC"/>
    <property type="match status" value="1"/>
</dbReference>
<dbReference type="InterPro" id="IPR012337">
    <property type="entry name" value="RNaseH-like_sf"/>
</dbReference>
<dbReference type="InterPro" id="IPR036397">
    <property type="entry name" value="RNaseH_sf"/>
</dbReference>
<dbReference type="InterPro" id="IPR020563">
    <property type="entry name" value="X-over_junc_endoDNase_Mg_BS"/>
</dbReference>
<dbReference type="InterPro" id="IPR002176">
    <property type="entry name" value="X-over_junc_endoDNase_RuvC"/>
</dbReference>
<dbReference type="NCBIfam" id="NF000711">
    <property type="entry name" value="PRK00039.2-1"/>
    <property type="match status" value="1"/>
</dbReference>
<dbReference type="NCBIfam" id="TIGR00228">
    <property type="entry name" value="ruvC"/>
    <property type="match status" value="1"/>
</dbReference>
<dbReference type="PANTHER" id="PTHR30194">
    <property type="entry name" value="CROSSOVER JUNCTION ENDODEOXYRIBONUCLEASE RUVC"/>
    <property type="match status" value="1"/>
</dbReference>
<dbReference type="PANTHER" id="PTHR30194:SF3">
    <property type="entry name" value="CROSSOVER JUNCTION ENDODEOXYRIBONUCLEASE RUVC"/>
    <property type="match status" value="1"/>
</dbReference>
<dbReference type="Pfam" id="PF02075">
    <property type="entry name" value="RuvC"/>
    <property type="match status" value="1"/>
</dbReference>
<dbReference type="PRINTS" id="PR00696">
    <property type="entry name" value="RSOLVASERUVC"/>
</dbReference>
<dbReference type="SUPFAM" id="SSF53098">
    <property type="entry name" value="Ribonuclease H-like"/>
    <property type="match status" value="1"/>
</dbReference>
<dbReference type="PROSITE" id="PS01321">
    <property type="entry name" value="RUVC"/>
    <property type="match status" value="1"/>
</dbReference>
<evidence type="ECO:0000255" key="1">
    <source>
        <dbReference type="HAMAP-Rule" id="MF_00034"/>
    </source>
</evidence>
<comment type="function">
    <text evidence="1">The RuvA-RuvB-RuvC complex processes Holliday junction (HJ) DNA during genetic recombination and DNA repair. Endonuclease that resolves HJ intermediates. Cleaves cruciform DNA by making single-stranded nicks across the HJ at symmetrical positions within the homologous arms, yielding a 5'-phosphate and a 3'-hydroxyl group; requires a central core of homology in the junction. The consensus cleavage sequence is 5'-(A/T)TT(C/G)-3'. Cleavage occurs on the 3'-side of the TT dinucleotide at the point of strand exchange. HJ branch migration catalyzed by RuvA-RuvB allows RuvC to scan DNA until it finds its consensus sequence, where it cleaves and resolves the cruciform DNA.</text>
</comment>
<comment type="catalytic activity">
    <reaction evidence="1">
        <text>Endonucleolytic cleavage at a junction such as a reciprocal single-stranded crossover between two homologous DNA duplexes (Holliday junction).</text>
        <dbReference type="EC" id="3.1.21.10"/>
    </reaction>
</comment>
<comment type="cofactor">
    <cofactor evidence="1">
        <name>Mg(2+)</name>
        <dbReference type="ChEBI" id="CHEBI:18420"/>
    </cofactor>
    <text evidence="1">Binds 2 Mg(2+) ion per subunit.</text>
</comment>
<comment type="subunit">
    <text evidence="1">Homodimer which binds Holliday junction (HJ) DNA. The HJ becomes 2-fold symmetrical on binding to RuvC with unstacked arms; it has a different conformation from HJ DNA in complex with RuvA. In the full resolvosome a probable DNA-RuvA(4)-RuvB(12)-RuvC(2) complex forms which resolves the HJ.</text>
</comment>
<comment type="subcellular location">
    <subcellularLocation>
        <location evidence="1">Cytoplasm</location>
    </subcellularLocation>
</comment>
<comment type="similarity">
    <text evidence="1">Belongs to the RuvC family.</text>
</comment>
<proteinExistence type="inferred from homology"/>
<accession>B9KZ87</accession>
<name>RUVC_THERP</name>
<protein>
    <recommendedName>
        <fullName evidence="1">Crossover junction endodeoxyribonuclease RuvC</fullName>
        <ecNumber evidence="1">3.1.21.10</ecNumber>
    </recommendedName>
    <alternativeName>
        <fullName evidence="1">Holliday junction nuclease RuvC</fullName>
    </alternativeName>
    <alternativeName>
        <fullName evidence="1">Holliday junction resolvase RuvC</fullName>
    </alternativeName>
</protein>
<sequence length="163" mass="17915">MRVLGVDPGMALLGYGVVEGGEPLRALSFGVVSTPAHLPVERRLVVLHDELAQLLEHWQPDVVALEQLFFARNVTTALAVGQARGIVLLLCGQRTIPVVEYTPAQVKQAVGGYGRARKREMQEMVRLLLRLPVLPQPDDAADALALAVCYFQYSRAAQLERFT</sequence>
<reference key="1">
    <citation type="journal article" date="2009" name="PLoS ONE">
        <title>Complete genome sequence of the aerobic CO-oxidizing thermophile Thermomicrobium roseum.</title>
        <authorList>
            <person name="Wu D."/>
            <person name="Raymond J."/>
            <person name="Wu M."/>
            <person name="Chatterji S."/>
            <person name="Ren Q."/>
            <person name="Graham J.E."/>
            <person name="Bryant D.A."/>
            <person name="Robb F."/>
            <person name="Colman A."/>
            <person name="Tallon L.J."/>
            <person name="Badger J.H."/>
            <person name="Madupu R."/>
            <person name="Ward N.L."/>
            <person name="Eisen J.A."/>
        </authorList>
    </citation>
    <scope>NUCLEOTIDE SEQUENCE [LARGE SCALE GENOMIC DNA]</scope>
    <source>
        <strain>ATCC 27502 / DSM 5159 / P-2</strain>
    </source>
</reference>
<feature type="chain" id="PRO_1000195274" description="Crossover junction endodeoxyribonuclease RuvC">
    <location>
        <begin position="1"/>
        <end position="163"/>
    </location>
</feature>
<feature type="active site" evidence="1">
    <location>
        <position position="7"/>
    </location>
</feature>
<feature type="active site" evidence="1">
    <location>
        <position position="66"/>
    </location>
</feature>
<feature type="active site" evidence="1">
    <location>
        <position position="139"/>
    </location>
</feature>
<feature type="binding site" evidence="1">
    <location>
        <position position="7"/>
    </location>
    <ligand>
        <name>Mg(2+)</name>
        <dbReference type="ChEBI" id="CHEBI:18420"/>
        <label>1</label>
    </ligand>
</feature>
<feature type="binding site" evidence="1">
    <location>
        <position position="66"/>
    </location>
    <ligand>
        <name>Mg(2+)</name>
        <dbReference type="ChEBI" id="CHEBI:18420"/>
        <label>2</label>
    </ligand>
</feature>
<feature type="binding site" evidence="1">
    <location>
        <position position="139"/>
    </location>
    <ligand>
        <name>Mg(2+)</name>
        <dbReference type="ChEBI" id="CHEBI:18420"/>
        <label>1</label>
    </ligand>
</feature>
<gene>
    <name evidence="1" type="primary">ruvC</name>
    <name type="ordered locus">trd_0801</name>
</gene>
<organism>
    <name type="scientific">Thermomicrobium roseum (strain ATCC 27502 / DSM 5159 / P-2)</name>
    <dbReference type="NCBI Taxonomy" id="309801"/>
    <lineage>
        <taxon>Bacteria</taxon>
        <taxon>Pseudomonadati</taxon>
        <taxon>Thermomicrobiota</taxon>
        <taxon>Thermomicrobia</taxon>
        <taxon>Thermomicrobiales</taxon>
        <taxon>Thermomicrobiaceae</taxon>
        <taxon>Thermomicrobium</taxon>
    </lineage>
</organism>
<keyword id="KW-0963">Cytoplasm</keyword>
<keyword id="KW-0227">DNA damage</keyword>
<keyword id="KW-0233">DNA recombination</keyword>
<keyword id="KW-0234">DNA repair</keyword>
<keyword id="KW-0238">DNA-binding</keyword>
<keyword id="KW-0255">Endonuclease</keyword>
<keyword id="KW-0378">Hydrolase</keyword>
<keyword id="KW-0460">Magnesium</keyword>
<keyword id="KW-0479">Metal-binding</keyword>
<keyword id="KW-0540">Nuclease</keyword>
<keyword id="KW-1185">Reference proteome</keyword>